<sequence length="117" mass="13005">MDWIWRILFLVGAATGAHSQMQLVQSGPEVKKPGTSVKVSCKASGFTFTSSAVQWVRQARGQRLEWIGWIVVGSGNTNYAQKFQERVTITRDMSTSTAYMELSSLRSEDTAVYYCAA</sequence>
<feature type="signal peptide" evidence="2">
    <location>
        <begin position="1"/>
        <end position="19"/>
    </location>
</feature>
<feature type="chain" id="PRO_5007964478" description="Immunoglobulin heavy variable 1-58" evidence="2">
    <location>
        <begin position="20"/>
        <end position="117"/>
    </location>
</feature>
<feature type="domain" description="Ig-like" evidence="3">
    <location>
        <begin position="20"/>
        <end position="117" status="greater than"/>
    </location>
</feature>
<feature type="region of interest" description="Framework-1" evidence="1">
    <location>
        <begin position="20"/>
        <end position="44"/>
    </location>
</feature>
<feature type="region of interest" description="Complementarity-determining-1" evidence="1">
    <location>
        <begin position="45"/>
        <end position="52"/>
    </location>
</feature>
<feature type="region of interest" description="Framework-2" evidence="1">
    <location>
        <begin position="53"/>
        <end position="69"/>
    </location>
</feature>
<feature type="region of interest" description="Complementarity-determining-2" evidence="1">
    <location>
        <begin position="70"/>
        <end position="77"/>
    </location>
</feature>
<feature type="region of interest" description="Framework-3" evidence="1">
    <location>
        <begin position="78"/>
        <end position="115"/>
    </location>
</feature>
<feature type="region of interest" description="Complementarity-determining-3" evidence="1">
    <location>
        <begin position="116"/>
        <end position="117" status="greater than"/>
    </location>
</feature>
<feature type="disulfide bond" evidence="3">
    <location>
        <begin position="41"/>
        <end position="115"/>
    </location>
</feature>
<feature type="non-terminal residue">
    <location>
        <position position="117"/>
    </location>
</feature>
<evidence type="ECO:0000250" key="1">
    <source>
        <dbReference type="UniProtKB" id="P23083"/>
    </source>
</evidence>
<evidence type="ECO:0000255" key="2"/>
<evidence type="ECO:0000255" key="3">
    <source>
        <dbReference type="PROSITE-ProRule" id="PRU00114"/>
    </source>
</evidence>
<evidence type="ECO:0000303" key="4">
    <source>
    </source>
</evidence>
<evidence type="ECO:0000303" key="5">
    <source>
    </source>
</evidence>
<evidence type="ECO:0000303" key="6">
    <source>
    </source>
</evidence>
<evidence type="ECO:0000303" key="7">
    <source>
    </source>
</evidence>
<evidence type="ECO:0000303" key="8">
    <source>
    </source>
</evidence>
<evidence type="ECO:0000303" key="9">
    <source ref="3"/>
</evidence>
<evidence type="ECO:0000305" key="10"/>
<gene>
    <name evidence="4 9" type="primary">IGHV1-58</name>
</gene>
<accession>A0A0C4DH39</accession>
<comment type="function">
    <text evidence="5 6 7 8">V region of the variable domain of immunoglobulin heavy chains that participates in the antigen recognition (PubMed:24600447). Immunoglobulins, also known as antibodies, are membrane-bound or secreted glycoproteins produced by B lymphocytes. In the recognition phase of humoral immunity, the membrane-bound immunoglobulins serve as receptors which, upon binding of a specific antigen, trigger the clonal expansion and differentiation of B lymphocytes into immunoglobulins-secreting plasma cells. Secreted immunoglobulins mediate the effector phase of humoral immunity, which results in the elimination of bound antigens (PubMed:20176268, PubMed:22158414). The antigen binding site is formed by the variable domain of one heavy chain, together with that of its associated light chain. Thus, each immunoglobulin has two antigen binding sites with remarkable affinity for a particular antigen. The variable domains are assembled by a process called V-(D)-J rearrangement and can then be subjected to somatic hypermutations which, after exposure to antigen and selection, allow affinity maturation for a particular antigen (PubMed:17576170, PubMed:20176268).</text>
</comment>
<comment type="subunit">
    <text evidence="6">Immunoglobulins are composed of two identical heavy chains and two identical light chains; disulfide-linked.</text>
</comment>
<comment type="subcellular location">
    <subcellularLocation>
        <location evidence="6 7">Secreted</location>
    </subcellularLocation>
    <subcellularLocation>
        <location evidence="6 7">Cell membrane</location>
    </subcellularLocation>
</comment>
<comment type="polymorphism">
    <text evidence="10">There are several alleles. The sequence shown is that of IMGT allele IGHV1-58*01.</text>
</comment>
<comment type="caution">
    <text evidence="10">For examples of full-length immunoglobulin heavy chains (of different isotypes) see AC P0DOX2, AC P0DOX3, AC P0DOX4, AC P0DOX5 and AC P0DOX6.</text>
</comment>
<organism>
    <name type="scientific">Homo sapiens</name>
    <name type="common">Human</name>
    <dbReference type="NCBI Taxonomy" id="9606"/>
    <lineage>
        <taxon>Eukaryota</taxon>
        <taxon>Metazoa</taxon>
        <taxon>Chordata</taxon>
        <taxon>Craniata</taxon>
        <taxon>Vertebrata</taxon>
        <taxon>Euteleostomi</taxon>
        <taxon>Mammalia</taxon>
        <taxon>Eutheria</taxon>
        <taxon>Euarchontoglires</taxon>
        <taxon>Primates</taxon>
        <taxon>Haplorrhini</taxon>
        <taxon>Catarrhini</taxon>
        <taxon>Hominidae</taxon>
        <taxon>Homo</taxon>
    </lineage>
</organism>
<keyword id="KW-1064">Adaptive immunity</keyword>
<keyword id="KW-1003">Cell membrane</keyword>
<keyword id="KW-1015">Disulfide bond</keyword>
<keyword id="KW-0391">Immunity</keyword>
<keyword id="KW-1280">Immunoglobulin</keyword>
<keyword id="KW-0393">Immunoglobulin domain</keyword>
<keyword id="KW-0472">Membrane</keyword>
<keyword id="KW-1267">Proteomics identification</keyword>
<keyword id="KW-1185">Reference proteome</keyword>
<keyword id="KW-0964">Secreted</keyword>
<keyword id="KW-0732">Signal</keyword>
<name>HV158_HUMAN</name>
<protein>
    <recommendedName>
        <fullName evidence="4 9">Immunoglobulin heavy variable 1-58</fullName>
    </recommendedName>
</protein>
<proteinExistence type="evidence at protein level"/>
<dbReference type="EMBL" id="AC244452">
    <property type="status" value="NOT_ANNOTATED_CDS"/>
    <property type="molecule type" value="Genomic_DNA"/>
</dbReference>
<dbReference type="SMR" id="A0A0C4DH39"/>
<dbReference type="FunCoup" id="A0A0C4DH39">
    <property type="interactions" value="281"/>
</dbReference>
<dbReference type="IMGT_GENE-DB" id="IGHV1-58"/>
<dbReference type="BioMuta" id="IGHV1-58"/>
<dbReference type="MassIVE" id="A0A0C4DH39"/>
<dbReference type="Ensembl" id="ENST00000390628.3">
    <property type="protein sequence ID" value="ENSP00000375037.2"/>
    <property type="gene ID" value="ENSG00000211968.3"/>
</dbReference>
<dbReference type="Ensembl" id="ENST00000632614.1">
    <property type="protein sequence ID" value="ENSP00000488516.1"/>
    <property type="gene ID" value="ENSG00000282337.1"/>
</dbReference>
<dbReference type="AGR" id="HGNC:5555"/>
<dbReference type="GeneCards" id="IGHV1-58"/>
<dbReference type="HGNC" id="HGNC:5555">
    <property type="gene designation" value="IGHV1-58"/>
</dbReference>
<dbReference type="HPA" id="ENSG00000211968">
    <property type="expression patterns" value="Group enriched (lymphoid tissue, urinary bladder)"/>
</dbReference>
<dbReference type="neXtProt" id="NX_A0A0C4DH39"/>
<dbReference type="OpenTargets" id="ENSG00000211968"/>
<dbReference type="VEuPathDB" id="HostDB:ENSG00000211968"/>
<dbReference type="GeneTree" id="ENSGT00950000183013"/>
<dbReference type="HOGENOM" id="CLU_077975_5_2_1"/>
<dbReference type="InParanoid" id="A0A0C4DH39"/>
<dbReference type="OMA" id="DWISHQR"/>
<dbReference type="OrthoDB" id="9901223at2759"/>
<dbReference type="PAN-GO" id="A0A0C4DH39">
    <property type="GO annotations" value="11 GO annotations based on evolutionary models"/>
</dbReference>
<dbReference type="PhylomeDB" id="A0A0C4DH39"/>
<dbReference type="ChiTaRS" id="IGHV1-58">
    <property type="organism name" value="human"/>
</dbReference>
<dbReference type="Pharos" id="A0A0C4DH39">
    <property type="development level" value="Tdark"/>
</dbReference>
<dbReference type="PRO" id="PR:A0A0C4DH39"/>
<dbReference type="Proteomes" id="UP000005640">
    <property type="component" value="Chromosome 14"/>
</dbReference>
<dbReference type="RNAct" id="A0A0C4DH39">
    <property type="molecule type" value="protein"/>
</dbReference>
<dbReference type="Bgee" id="ENSG00000211968">
    <property type="expression patterns" value="Expressed in lymph node and 77 other cell types or tissues"/>
</dbReference>
<dbReference type="GO" id="GO:0005576">
    <property type="term" value="C:extracellular region"/>
    <property type="evidence" value="ECO:0007669"/>
    <property type="project" value="UniProtKB-SubCell"/>
</dbReference>
<dbReference type="GO" id="GO:0019814">
    <property type="term" value="C:immunoglobulin complex"/>
    <property type="evidence" value="ECO:0007669"/>
    <property type="project" value="UniProtKB-KW"/>
</dbReference>
<dbReference type="GO" id="GO:0005886">
    <property type="term" value="C:plasma membrane"/>
    <property type="evidence" value="ECO:0007669"/>
    <property type="project" value="UniProtKB-SubCell"/>
</dbReference>
<dbReference type="GO" id="GO:0003823">
    <property type="term" value="F:antigen binding"/>
    <property type="evidence" value="ECO:0000318"/>
    <property type="project" value="GO_Central"/>
</dbReference>
<dbReference type="GO" id="GO:0016064">
    <property type="term" value="P:immunoglobulin mediated immune response"/>
    <property type="evidence" value="ECO:0000318"/>
    <property type="project" value="GO_Central"/>
</dbReference>
<dbReference type="FunFam" id="2.60.40.10:FF:000556">
    <property type="entry name" value="Immunoglobulin heavy variable 7-81 (non-functional)"/>
    <property type="match status" value="1"/>
</dbReference>
<dbReference type="Gene3D" id="2.60.40.10">
    <property type="entry name" value="Immunoglobulins"/>
    <property type="match status" value="1"/>
</dbReference>
<dbReference type="InterPro" id="IPR007110">
    <property type="entry name" value="Ig-like_dom"/>
</dbReference>
<dbReference type="InterPro" id="IPR036179">
    <property type="entry name" value="Ig-like_dom_sf"/>
</dbReference>
<dbReference type="InterPro" id="IPR013783">
    <property type="entry name" value="Ig-like_fold"/>
</dbReference>
<dbReference type="InterPro" id="IPR013106">
    <property type="entry name" value="Ig_V-set"/>
</dbReference>
<dbReference type="InterPro" id="IPR050199">
    <property type="entry name" value="IgHV"/>
</dbReference>
<dbReference type="PANTHER" id="PTHR23266">
    <property type="entry name" value="IMMUNOGLOBULIN HEAVY CHAIN"/>
    <property type="match status" value="1"/>
</dbReference>
<dbReference type="Pfam" id="PF07686">
    <property type="entry name" value="V-set"/>
    <property type="match status" value="1"/>
</dbReference>
<dbReference type="SMART" id="SM00406">
    <property type="entry name" value="IGv"/>
    <property type="match status" value="1"/>
</dbReference>
<dbReference type="SUPFAM" id="SSF48726">
    <property type="entry name" value="Immunoglobulin"/>
    <property type="match status" value="1"/>
</dbReference>
<dbReference type="PROSITE" id="PS50835">
    <property type="entry name" value="IG_LIKE"/>
    <property type="match status" value="1"/>
</dbReference>
<reference key="1">
    <citation type="journal article" date="2003" name="Nature">
        <title>The DNA sequence and analysis of human chromosome 14.</title>
        <authorList>
            <person name="Heilig R."/>
            <person name="Eckenberg R."/>
            <person name="Petit J.-L."/>
            <person name="Fonknechten N."/>
            <person name="Da Silva C."/>
            <person name="Cattolico L."/>
            <person name="Levy M."/>
            <person name="Barbe V."/>
            <person name="De Berardinis V."/>
            <person name="Ureta-Vidal A."/>
            <person name="Pelletier E."/>
            <person name="Vico V."/>
            <person name="Anthouard V."/>
            <person name="Rowen L."/>
            <person name="Madan A."/>
            <person name="Qin S."/>
            <person name="Sun H."/>
            <person name="Du H."/>
            <person name="Pepin K."/>
            <person name="Artiguenave F."/>
            <person name="Robert C."/>
            <person name="Cruaud C."/>
            <person name="Bruels T."/>
            <person name="Jaillon O."/>
            <person name="Friedlander L."/>
            <person name="Samson G."/>
            <person name="Brottier P."/>
            <person name="Cure S."/>
            <person name="Segurens B."/>
            <person name="Aniere F."/>
            <person name="Samain S."/>
            <person name="Crespeau H."/>
            <person name="Abbasi N."/>
            <person name="Aiach N."/>
            <person name="Boscus D."/>
            <person name="Dickhoff R."/>
            <person name="Dors M."/>
            <person name="Dubois I."/>
            <person name="Friedman C."/>
            <person name="Gouyvenoux M."/>
            <person name="James R."/>
            <person name="Madan A."/>
            <person name="Mairey-Estrada B."/>
            <person name="Mangenot S."/>
            <person name="Martins N."/>
            <person name="Menard M."/>
            <person name="Oztas S."/>
            <person name="Ratcliffe A."/>
            <person name="Shaffer T."/>
            <person name="Trask B."/>
            <person name="Vacherie B."/>
            <person name="Bellemere C."/>
            <person name="Belser C."/>
            <person name="Besnard-Gonnet M."/>
            <person name="Bartol-Mavel D."/>
            <person name="Boutard M."/>
            <person name="Briez-Silla S."/>
            <person name="Combette S."/>
            <person name="Dufosse-Laurent V."/>
            <person name="Ferron C."/>
            <person name="Lechaplais C."/>
            <person name="Louesse C."/>
            <person name="Muselet D."/>
            <person name="Magdelenat G."/>
            <person name="Pateau E."/>
            <person name="Petit E."/>
            <person name="Sirvain-Trukniewicz P."/>
            <person name="Trybou A."/>
            <person name="Vega-Czarny N."/>
            <person name="Bataille E."/>
            <person name="Bluet E."/>
            <person name="Bordelais I."/>
            <person name="Dubois M."/>
            <person name="Dumont C."/>
            <person name="Guerin T."/>
            <person name="Haffray S."/>
            <person name="Hammadi R."/>
            <person name="Muanga J."/>
            <person name="Pellouin V."/>
            <person name="Robert D."/>
            <person name="Wunderle E."/>
            <person name="Gauguet G."/>
            <person name="Roy A."/>
            <person name="Sainte-Marthe L."/>
            <person name="Verdier J."/>
            <person name="Verdier-Discala C."/>
            <person name="Hillier L.W."/>
            <person name="Fulton L."/>
            <person name="McPherson J."/>
            <person name="Matsuda F."/>
            <person name="Wilson R."/>
            <person name="Scarpelli C."/>
            <person name="Gyapay G."/>
            <person name="Wincker P."/>
            <person name="Saurin W."/>
            <person name="Quetier F."/>
            <person name="Waterston R."/>
            <person name="Hood L."/>
            <person name="Weissenbach J."/>
        </authorList>
    </citation>
    <scope>NUCLEOTIDE SEQUENCE [LARGE SCALE GENOMIC DNA] (IMGT ALLELE IGHV1-58*01)</scope>
</reference>
<reference key="2">
    <citation type="journal article" date="2001" name="Exp. Clin. Immunogenet.">
        <title>Nomenclature of the human immunoglobulin heavy (IGH) genes.</title>
        <authorList>
            <person name="Lefranc M.P."/>
        </authorList>
    </citation>
    <scope>NOMENCLATURE</scope>
</reference>
<reference key="3">
    <citation type="book" date="2001" name="The Immunoglobulin FactsBook.">
        <title>The Immunoglobulin FactsBook.</title>
        <editorList>
            <person name="Lefranc M.P."/>
            <person name="Lefranc G."/>
        </editorList>
        <authorList>
            <person name="Lefranc M.P."/>
            <person name="Lefranc G."/>
        </authorList>
    </citation>
    <scope>NOMENCLATURE</scope>
</reference>
<reference key="4">
    <citation type="journal article" date="2007" name="Annu. Rev. Genet.">
        <title>Immunoglobulin somatic hypermutation.</title>
        <authorList>
            <person name="Teng G."/>
            <person name="Papavasiliou F.N."/>
        </authorList>
    </citation>
    <scope>REVIEW ON SOMATIC HYPERMUTATION</scope>
</reference>
<reference key="5">
    <citation type="journal article" date="2010" name="J. Allergy Clin. Immunol.">
        <title>Structure and function of immunoglobulins.</title>
        <authorList>
            <person name="Schroeder H.W. Jr."/>
            <person name="Cavacini L."/>
        </authorList>
    </citation>
    <scope>REVIEW ON IMMUNOGLOBULINS</scope>
</reference>
<reference key="6">
    <citation type="journal article" date="2012" name="Nat. Rev. Immunol.">
        <title>Molecular programming of B cell memory.</title>
        <authorList>
            <person name="McHeyzer-Williams M."/>
            <person name="Okitsu S."/>
            <person name="Wang N."/>
            <person name="McHeyzer-Williams L."/>
        </authorList>
    </citation>
    <scope>REVIEW ON FUNCTION</scope>
</reference>
<reference key="7">
    <citation type="journal article" date="2014" name="Front. Immunol.">
        <title>Immunoglobulin and T Cell Receptor Genes: IMGT((R)) and the Birth and Rise of Immunoinformatics.</title>
        <authorList>
            <person name="Lefranc M.P."/>
        </authorList>
    </citation>
    <scope>NOMENCLATURE</scope>
</reference>